<dbReference type="EMBL" id="AC079677">
    <property type="protein sequence ID" value="AAG52637.1"/>
    <property type="molecule type" value="Genomic_DNA"/>
</dbReference>
<dbReference type="EMBL" id="CP002684">
    <property type="protein sequence ID" value="AEE32139.1"/>
    <property type="molecule type" value="Genomic_DNA"/>
</dbReference>
<dbReference type="EMBL" id="DQ446333">
    <property type="protein sequence ID" value="ABE65694.1"/>
    <property type="molecule type" value="mRNA"/>
</dbReference>
<dbReference type="EMBL" id="DQ652884">
    <property type="protein sequence ID" value="ABK28434.1"/>
    <property type="status" value="ALT_SEQ"/>
    <property type="molecule type" value="mRNA"/>
</dbReference>
<dbReference type="PIR" id="H96512">
    <property type="entry name" value="H96512"/>
</dbReference>
<dbReference type="RefSeq" id="NP_175155.1">
    <property type="nucleotide sequence ID" value="NM_103616.1"/>
</dbReference>
<dbReference type="SMR" id="A0MEB5"/>
<dbReference type="BioGRID" id="26350">
    <property type="interactions" value="33"/>
</dbReference>
<dbReference type="FunCoup" id="A0MEB5">
    <property type="interactions" value="1576"/>
</dbReference>
<dbReference type="IntAct" id="A0MEB5">
    <property type="interactions" value="33"/>
</dbReference>
<dbReference type="STRING" id="3702.A0MEB5"/>
<dbReference type="PaxDb" id="3702-AT1G47220.1"/>
<dbReference type="EnsemblPlants" id="AT1G47220.1">
    <property type="protein sequence ID" value="AT1G47220.1"/>
    <property type="gene ID" value="AT1G47220"/>
</dbReference>
<dbReference type="GeneID" id="841125"/>
<dbReference type="Gramene" id="AT1G47220.1">
    <property type="protein sequence ID" value="AT1G47220.1"/>
    <property type="gene ID" value="AT1G47220"/>
</dbReference>
<dbReference type="KEGG" id="ath:AT1G47220"/>
<dbReference type="Araport" id="AT1G47220"/>
<dbReference type="TAIR" id="AT1G47220">
    <property type="gene designation" value="CYCA3"/>
</dbReference>
<dbReference type="eggNOG" id="KOG0654">
    <property type="taxonomic scope" value="Eukaryota"/>
</dbReference>
<dbReference type="HOGENOM" id="CLU_020695_2_4_1"/>
<dbReference type="InParanoid" id="A0MEB5"/>
<dbReference type="OMA" id="EYKFIVY"/>
<dbReference type="OrthoDB" id="5590282at2759"/>
<dbReference type="PhylomeDB" id="A0MEB5"/>
<dbReference type="PRO" id="PR:A0MEB5"/>
<dbReference type="Proteomes" id="UP000006548">
    <property type="component" value="Chromosome 1"/>
</dbReference>
<dbReference type="ExpressionAtlas" id="A0MEB5">
    <property type="expression patterns" value="differential"/>
</dbReference>
<dbReference type="GO" id="GO:0016538">
    <property type="term" value="F:cyclin-dependent protein serine/threonine kinase regulator activity"/>
    <property type="evidence" value="ECO:0007669"/>
    <property type="project" value="InterPro"/>
</dbReference>
<dbReference type="GO" id="GO:0051301">
    <property type="term" value="P:cell division"/>
    <property type="evidence" value="ECO:0007669"/>
    <property type="project" value="UniProtKB-KW"/>
</dbReference>
<dbReference type="GO" id="GO:0044772">
    <property type="term" value="P:mitotic cell cycle phase transition"/>
    <property type="evidence" value="ECO:0007669"/>
    <property type="project" value="InterPro"/>
</dbReference>
<dbReference type="CDD" id="cd20506">
    <property type="entry name" value="CYCLIN_AtCycA-like_rpt2"/>
    <property type="match status" value="1"/>
</dbReference>
<dbReference type="CDD" id="cd20562">
    <property type="entry name" value="CYCLIN_AtCycA_like_rpt1"/>
    <property type="match status" value="1"/>
</dbReference>
<dbReference type="FunFam" id="1.10.472.10:FF:000220">
    <property type="entry name" value="Cyclin superfamily protein, putative"/>
    <property type="match status" value="1"/>
</dbReference>
<dbReference type="FunFam" id="1.10.472.10:FF:000001">
    <property type="entry name" value="G2/mitotic-specific cyclin"/>
    <property type="match status" value="1"/>
</dbReference>
<dbReference type="Gene3D" id="1.10.472.10">
    <property type="entry name" value="Cyclin-like"/>
    <property type="match status" value="2"/>
</dbReference>
<dbReference type="InterPro" id="IPR039361">
    <property type="entry name" value="Cyclin"/>
</dbReference>
<dbReference type="InterPro" id="IPR013763">
    <property type="entry name" value="Cyclin-like_dom"/>
</dbReference>
<dbReference type="InterPro" id="IPR036915">
    <property type="entry name" value="Cyclin-like_sf"/>
</dbReference>
<dbReference type="InterPro" id="IPR046965">
    <property type="entry name" value="Cyclin_A/B-like"/>
</dbReference>
<dbReference type="InterPro" id="IPR004367">
    <property type="entry name" value="Cyclin_C-dom"/>
</dbReference>
<dbReference type="InterPro" id="IPR006671">
    <property type="entry name" value="Cyclin_N"/>
</dbReference>
<dbReference type="InterPro" id="IPR048258">
    <property type="entry name" value="Cyclins_cyclin-box"/>
</dbReference>
<dbReference type="PANTHER" id="PTHR10177">
    <property type="entry name" value="CYCLINS"/>
    <property type="match status" value="1"/>
</dbReference>
<dbReference type="Pfam" id="PF02984">
    <property type="entry name" value="Cyclin_C"/>
    <property type="match status" value="1"/>
</dbReference>
<dbReference type="Pfam" id="PF00134">
    <property type="entry name" value="Cyclin_N"/>
    <property type="match status" value="1"/>
</dbReference>
<dbReference type="PIRSF" id="PIRSF001771">
    <property type="entry name" value="Cyclin_A_B_D_E"/>
    <property type="match status" value="1"/>
</dbReference>
<dbReference type="SMART" id="SM00385">
    <property type="entry name" value="CYCLIN"/>
    <property type="match status" value="2"/>
</dbReference>
<dbReference type="SMART" id="SM01332">
    <property type="entry name" value="Cyclin_C"/>
    <property type="match status" value="1"/>
</dbReference>
<dbReference type="SUPFAM" id="SSF47954">
    <property type="entry name" value="Cyclin-like"/>
    <property type="match status" value="2"/>
</dbReference>
<dbReference type="PROSITE" id="PS00292">
    <property type="entry name" value="CYCLINS"/>
    <property type="match status" value="1"/>
</dbReference>
<keyword id="KW-0131">Cell cycle</keyword>
<keyword id="KW-0132">Cell division</keyword>
<keyword id="KW-0195">Cyclin</keyword>
<keyword id="KW-1185">Reference proteome</keyword>
<proteinExistence type="evidence at transcript level"/>
<feature type="chain" id="PRO_0000287000" description="Cyclin-A3-3">
    <location>
        <begin position="1"/>
        <end position="327"/>
    </location>
</feature>
<protein>
    <recommendedName>
        <fullName>Cyclin-A3-3</fullName>
    </recommendedName>
    <alternativeName>
        <fullName>G2/mitotic-specific cyclin-A3-3</fullName>
        <shortName>CycA3;3</shortName>
    </alternativeName>
</protein>
<accession>A0MEB5</accession>
<accession>Q9C6B0</accession>
<reference key="1">
    <citation type="journal article" date="2000" name="Nature">
        <title>Sequence and analysis of chromosome 1 of the plant Arabidopsis thaliana.</title>
        <authorList>
            <person name="Theologis A."/>
            <person name="Ecker J.R."/>
            <person name="Palm C.J."/>
            <person name="Federspiel N.A."/>
            <person name="Kaul S."/>
            <person name="White O."/>
            <person name="Alonso J."/>
            <person name="Altafi H."/>
            <person name="Araujo R."/>
            <person name="Bowman C.L."/>
            <person name="Brooks S.Y."/>
            <person name="Buehler E."/>
            <person name="Chan A."/>
            <person name="Chao Q."/>
            <person name="Chen H."/>
            <person name="Cheuk R.F."/>
            <person name="Chin C.W."/>
            <person name="Chung M.K."/>
            <person name="Conn L."/>
            <person name="Conway A.B."/>
            <person name="Conway A.R."/>
            <person name="Creasy T.H."/>
            <person name="Dewar K."/>
            <person name="Dunn P."/>
            <person name="Etgu P."/>
            <person name="Feldblyum T.V."/>
            <person name="Feng J.-D."/>
            <person name="Fong B."/>
            <person name="Fujii C.Y."/>
            <person name="Gill J.E."/>
            <person name="Goldsmith A.D."/>
            <person name="Haas B."/>
            <person name="Hansen N.F."/>
            <person name="Hughes B."/>
            <person name="Huizar L."/>
            <person name="Hunter J.L."/>
            <person name="Jenkins J."/>
            <person name="Johnson-Hopson C."/>
            <person name="Khan S."/>
            <person name="Khaykin E."/>
            <person name="Kim C.J."/>
            <person name="Koo H.L."/>
            <person name="Kremenetskaia I."/>
            <person name="Kurtz D.B."/>
            <person name="Kwan A."/>
            <person name="Lam B."/>
            <person name="Langin-Hooper S."/>
            <person name="Lee A."/>
            <person name="Lee J.M."/>
            <person name="Lenz C.A."/>
            <person name="Li J.H."/>
            <person name="Li Y.-P."/>
            <person name="Lin X."/>
            <person name="Liu S.X."/>
            <person name="Liu Z.A."/>
            <person name="Luros J.S."/>
            <person name="Maiti R."/>
            <person name="Marziali A."/>
            <person name="Militscher J."/>
            <person name="Miranda M."/>
            <person name="Nguyen M."/>
            <person name="Nierman W.C."/>
            <person name="Osborne B.I."/>
            <person name="Pai G."/>
            <person name="Peterson J."/>
            <person name="Pham P.K."/>
            <person name="Rizzo M."/>
            <person name="Rooney T."/>
            <person name="Rowley D."/>
            <person name="Sakano H."/>
            <person name="Salzberg S.L."/>
            <person name="Schwartz J.R."/>
            <person name="Shinn P."/>
            <person name="Southwick A.M."/>
            <person name="Sun H."/>
            <person name="Tallon L.J."/>
            <person name="Tambunga G."/>
            <person name="Toriumi M.J."/>
            <person name="Town C.D."/>
            <person name="Utterback T."/>
            <person name="Van Aken S."/>
            <person name="Vaysberg M."/>
            <person name="Vysotskaia V.S."/>
            <person name="Walker M."/>
            <person name="Wu D."/>
            <person name="Yu G."/>
            <person name="Fraser C.M."/>
            <person name="Venter J.C."/>
            <person name="Davis R.W."/>
        </authorList>
    </citation>
    <scope>NUCLEOTIDE SEQUENCE [LARGE SCALE GENOMIC DNA]</scope>
    <source>
        <strain>cv. Columbia</strain>
    </source>
</reference>
<reference key="2">
    <citation type="journal article" date="2017" name="Plant J.">
        <title>Araport11: a complete reannotation of the Arabidopsis thaliana reference genome.</title>
        <authorList>
            <person name="Cheng C.Y."/>
            <person name="Krishnakumar V."/>
            <person name="Chan A.P."/>
            <person name="Thibaud-Nissen F."/>
            <person name="Schobel S."/>
            <person name="Town C.D."/>
        </authorList>
    </citation>
    <scope>GENOME REANNOTATION</scope>
    <source>
        <strain>cv. Columbia</strain>
    </source>
</reference>
<reference key="3">
    <citation type="journal article" date="2006" name="Plant Biotechnol. J.">
        <title>Simultaneous high-throughput recombinational cloning of open reading frames in closed and open configurations.</title>
        <authorList>
            <person name="Underwood B.A."/>
            <person name="Vanderhaeghen R."/>
            <person name="Whitford R."/>
            <person name="Town C.D."/>
            <person name="Hilson P."/>
        </authorList>
    </citation>
    <scope>NUCLEOTIDE SEQUENCE [LARGE SCALE MRNA]</scope>
    <source>
        <strain>cv. Columbia</strain>
    </source>
</reference>
<reference key="4">
    <citation type="journal article" date="2004" name="Plant Physiol.">
        <title>Genome-wide analysis of the cyclin family in Arabidopsis and comparative phylogenetic analysis of plant cyclin-like proteins.</title>
        <authorList>
            <person name="Wang G."/>
            <person name="Kong H."/>
            <person name="Sun Y."/>
            <person name="Zhang X."/>
            <person name="Zhang W."/>
            <person name="Altman N."/>
            <person name="dePamphilis C.W."/>
            <person name="Ma H."/>
        </authorList>
    </citation>
    <scope>GENE FAMILY</scope>
    <scope>NOMENCLATURE</scope>
</reference>
<name>CCA33_ARATH</name>
<organism>
    <name type="scientific">Arabidopsis thaliana</name>
    <name type="common">Mouse-ear cress</name>
    <dbReference type="NCBI Taxonomy" id="3702"/>
    <lineage>
        <taxon>Eukaryota</taxon>
        <taxon>Viridiplantae</taxon>
        <taxon>Streptophyta</taxon>
        <taxon>Embryophyta</taxon>
        <taxon>Tracheophyta</taxon>
        <taxon>Spermatophyta</taxon>
        <taxon>Magnoliopsida</taxon>
        <taxon>eudicotyledons</taxon>
        <taxon>Gunneridae</taxon>
        <taxon>Pentapetalae</taxon>
        <taxon>rosids</taxon>
        <taxon>malvids</taxon>
        <taxon>Brassicales</taxon>
        <taxon>Brassicaceae</taxon>
        <taxon>Camelineae</taxon>
        <taxon>Arabidopsis</taxon>
    </lineage>
</organism>
<comment type="similarity">
    <text evidence="1">Belongs to the cyclin family. Cyclin AB subfamily.</text>
</comment>
<comment type="sequence caution" evidence="1">
    <conflict type="erroneous termination">
        <sequence resource="EMBL-CDS" id="ABK28434"/>
    </conflict>
    <text>Extended C-terminus.</text>
</comment>
<evidence type="ECO:0000305" key="1"/>
<sequence length="327" mass="38130">MVSKKDKQIHSDHNPQDASPVEWAEIRHKLLAFQENIQSGSDIDARSDDPQMCGLYVSDIYEYLRELEVKPKLRPLHDYIEKIQEDITPSKRGVLVDWLVEVAEEFELVSETLYLTVSYIDRFLSLKMVNEHWLQLVGVSAMFIASKYEEKRRPKVEDFCYITANTYTKQDVLKMEEDILLALEFELGRPTTNTFLRRFIRVAQEDFKVPNLQLEPLCCYLSELSMLDYSCVKFVPSLLAASAVFLARFIILPNQHPWSQMLEECTKYKAADLQVCVEIMLDLYLSRSEGASKAVREKYKQHKFQYVAAIPVYQELPVTFWEDVVTI</sequence>
<gene>
    <name type="primary">CYCA3-3</name>
    <name type="ordered locus">At1g47220</name>
    <name type="ORF">F8G22.6</name>
</gene>